<comment type="function">
    <text evidence="1">Catalyzes the base-exchange of a guanine (G) residue with the queuine precursor 7-aminomethyl-7-deazaguanine (PreQ1) at position 34 (anticodon wobble position) in tRNAs with GU(N) anticodons (tRNA-Asp, -Asn, -His and -Tyr). Catalysis occurs through a double-displacement mechanism. The nucleophile active site attacks the C1' of nucleotide 34 to detach the guanine base from the RNA, forming a covalent enzyme-RNA intermediate. The proton acceptor active site deprotonates the incoming PreQ1, allowing a nucleophilic attack on the C1' of the ribose to form the product. After dissociation, two additional enzymatic reactions on the tRNA convert PreQ1 to queuine (Q), resulting in the hypermodified nucleoside queuosine (7-(((4,5-cis-dihydroxy-2-cyclopenten-1-yl)amino)methyl)-7-deazaguanosine).</text>
</comment>
<comment type="catalytic activity">
    <reaction evidence="1">
        <text>7-aminomethyl-7-carbaguanine + guanosine(34) in tRNA = 7-aminomethyl-7-carbaguanosine(34) in tRNA + guanine</text>
        <dbReference type="Rhea" id="RHEA:24104"/>
        <dbReference type="Rhea" id="RHEA-COMP:10341"/>
        <dbReference type="Rhea" id="RHEA-COMP:10342"/>
        <dbReference type="ChEBI" id="CHEBI:16235"/>
        <dbReference type="ChEBI" id="CHEBI:58703"/>
        <dbReference type="ChEBI" id="CHEBI:74269"/>
        <dbReference type="ChEBI" id="CHEBI:82833"/>
        <dbReference type="EC" id="2.4.2.29"/>
    </reaction>
</comment>
<comment type="cofactor">
    <cofactor evidence="1">
        <name>Zn(2+)</name>
        <dbReference type="ChEBI" id="CHEBI:29105"/>
    </cofactor>
    <text evidence="1">Binds 1 zinc ion per subunit.</text>
</comment>
<comment type="pathway">
    <text evidence="1">tRNA modification; tRNA-queuosine biosynthesis.</text>
</comment>
<comment type="subunit">
    <text evidence="1">Homodimer. Within each dimer, one monomer is responsible for RNA recognition and catalysis, while the other monomer binds to the replacement base PreQ1.</text>
</comment>
<comment type="similarity">
    <text evidence="1">Belongs to the queuine tRNA-ribosyltransferase family.</text>
</comment>
<protein>
    <recommendedName>
        <fullName evidence="1">Queuine tRNA-ribosyltransferase</fullName>
        <ecNumber evidence="1">2.4.2.29</ecNumber>
    </recommendedName>
    <alternativeName>
        <fullName evidence="1">Guanine insertion enzyme</fullName>
    </alternativeName>
    <alternativeName>
        <fullName evidence="1">tRNA-guanine transglycosylase</fullName>
    </alternativeName>
</protein>
<evidence type="ECO:0000255" key="1">
    <source>
        <dbReference type="HAMAP-Rule" id="MF_00168"/>
    </source>
</evidence>
<dbReference type="EC" id="2.4.2.29" evidence="1"/>
<dbReference type="EMBL" id="AL591979">
    <property type="protein sequence ID" value="CAC99608.1"/>
    <property type="molecule type" value="Genomic_DNA"/>
</dbReference>
<dbReference type="PIR" id="AB1266">
    <property type="entry name" value="AB1266"/>
</dbReference>
<dbReference type="RefSeq" id="NP_465055.1">
    <property type="nucleotide sequence ID" value="NC_003210.1"/>
</dbReference>
<dbReference type="RefSeq" id="WP_003723534.1">
    <property type="nucleotide sequence ID" value="NZ_CP149495.1"/>
</dbReference>
<dbReference type="SMR" id="Q8Y700"/>
<dbReference type="STRING" id="169963.gene:17594187"/>
<dbReference type="PaxDb" id="169963-lmo1530"/>
<dbReference type="EnsemblBacteria" id="CAC99608">
    <property type="protein sequence ID" value="CAC99608"/>
    <property type="gene ID" value="CAC99608"/>
</dbReference>
<dbReference type="GeneID" id="987798"/>
<dbReference type="KEGG" id="lmo:lmo1530"/>
<dbReference type="PATRIC" id="fig|169963.11.peg.1571"/>
<dbReference type="eggNOG" id="COG0343">
    <property type="taxonomic scope" value="Bacteria"/>
</dbReference>
<dbReference type="HOGENOM" id="CLU_022060_0_1_9"/>
<dbReference type="OrthoDB" id="9805417at2"/>
<dbReference type="PhylomeDB" id="Q8Y700"/>
<dbReference type="BioCyc" id="LMON169963:LMO1530-MONOMER"/>
<dbReference type="UniPathway" id="UPA00392"/>
<dbReference type="Proteomes" id="UP000000817">
    <property type="component" value="Chromosome"/>
</dbReference>
<dbReference type="GO" id="GO:0046872">
    <property type="term" value="F:metal ion binding"/>
    <property type="evidence" value="ECO:0007669"/>
    <property type="project" value="UniProtKB-KW"/>
</dbReference>
<dbReference type="GO" id="GO:0008479">
    <property type="term" value="F:tRNA-guanosine(34) queuine transglycosylase activity"/>
    <property type="evidence" value="ECO:0000318"/>
    <property type="project" value="GO_Central"/>
</dbReference>
<dbReference type="GO" id="GO:0008616">
    <property type="term" value="P:queuosine biosynthetic process"/>
    <property type="evidence" value="ECO:0007669"/>
    <property type="project" value="UniProtKB-UniRule"/>
</dbReference>
<dbReference type="GO" id="GO:0101030">
    <property type="term" value="P:tRNA-guanine transglycosylation"/>
    <property type="evidence" value="ECO:0000318"/>
    <property type="project" value="GO_Central"/>
</dbReference>
<dbReference type="FunFam" id="3.20.20.105:FF:000001">
    <property type="entry name" value="Queuine tRNA-ribosyltransferase"/>
    <property type="match status" value="1"/>
</dbReference>
<dbReference type="Gene3D" id="3.20.20.105">
    <property type="entry name" value="Queuine tRNA-ribosyltransferase-like"/>
    <property type="match status" value="1"/>
</dbReference>
<dbReference type="HAMAP" id="MF_00168">
    <property type="entry name" value="Q_tRNA_Tgt"/>
    <property type="match status" value="1"/>
</dbReference>
<dbReference type="InterPro" id="IPR050076">
    <property type="entry name" value="ArchSynthase1/Queuine_TRR"/>
</dbReference>
<dbReference type="InterPro" id="IPR004803">
    <property type="entry name" value="TGT"/>
</dbReference>
<dbReference type="InterPro" id="IPR036511">
    <property type="entry name" value="TGT-like_sf"/>
</dbReference>
<dbReference type="InterPro" id="IPR002616">
    <property type="entry name" value="tRNA_ribo_trans-like"/>
</dbReference>
<dbReference type="NCBIfam" id="TIGR00430">
    <property type="entry name" value="Q_tRNA_tgt"/>
    <property type="match status" value="1"/>
</dbReference>
<dbReference type="NCBIfam" id="TIGR00449">
    <property type="entry name" value="tgt_general"/>
    <property type="match status" value="1"/>
</dbReference>
<dbReference type="PANTHER" id="PTHR46499">
    <property type="entry name" value="QUEUINE TRNA-RIBOSYLTRANSFERASE"/>
    <property type="match status" value="1"/>
</dbReference>
<dbReference type="PANTHER" id="PTHR46499:SF1">
    <property type="entry name" value="QUEUINE TRNA-RIBOSYLTRANSFERASE"/>
    <property type="match status" value="1"/>
</dbReference>
<dbReference type="Pfam" id="PF01702">
    <property type="entry name" value="TGT"/>
    <property type="match status" value="1"/>
</dbReference>
<dbReference type="SUPFAM" id="SSF51713">
    <property type="entry name" value="tRNA-guanine transglycosylase"/>
    <property type="match status" value="1"/>
</dbReference>
<organism>
    <name type="scientific">Listeria monocytogenes serovar 1/2a (strain ATCC BAA-679 / EGD-e)</name>
    <dbReference type="NCBI Taxonomy" id="169963"/>
    <lineage>
        <taxon>Bacteria</taxon>
        <taxon>Bacillati</taxon>
        <taxon>Bacillota</taxon>
        <taxon>Bacilli</taxon>
        <taxon>Bacillales</taxon>
        <taxon>Listeriaceae</taxon>
        <taxon>Listeria</taxon>
    </lineage>
</organism>
<feature type="chain" id="PRO_0000135492" description="Queuine tRNA-ribosyltransferase">
    <location>
        <begin position="1"/>
        <end position="379"/>
    </location>
</feature>
<feature type="region of interest" description="RNA binding" evidence="1">
    <location>
        <begin position="249"/>
        <end position="255"/>
    </location>
</feature>
<feature type="region of interest" description="RNA binding; important for wobble base 34 recognition" evidence="1">
    <location>
        <begin position="273"/>
        <end position="277"/>
    </location>
</feature>
<feature type="active site" description="Proton acceptor" evidence="1">
    <location>
        <position position="94"/>
    </location>
</feature>
<feature type="active site" description="Nucleophile" evidence="1">
    <location>
        <position position="268"/>
    </location>
</feature>
<feature type="binding site" evidence="1">
    <location>
        <begin position="94"/>
        <end position="98"/>
    </location>
    <ligand>
        <name>substrate</name>
    </ligand>
</feature>
<feature type="binding site" evidence="1">
    <location>
        <position position="148"/>
    </location>
    <ligand>
        <name>substrate</name>
    </ligand>
</feature>
<feature type="binding site" evidence="1">
    <location>
        <position position="191"/>
    </location>
    <ligand>
        <name>substrate</name>
    </ligand>
</feature>
<feature type="binding site" evidence="1">
    <location>
        <position position="218"/>
    </location>
    <ligand>
        <name>substrate</name>
    </ligand>
</feature>
<feature type="binding site" evidence="1">
    <location>
        <position position="306"/>
    </location>
    <ligand>
        <name>Zn(2+)</name>
        <dbReference type="ChEBI" id="CHEBI:29105"/>
    </ligand>
</feature>
<feature type="binding site" evidence="1">
    <location>
        <position position="308"/>
    </location>
    <ligand>
        <name>Zn(2+)</name>
        <dbReference type="ChEBI" id="CHEBI:29105"/>
    </ligand>
</feature>
<feature type="binding site" evidence="1">
    <location>
        <position position="311"/>
    </location>
    <ligand>
        <name>Zn(2+)</name>
        <dbReference type="ChEBI" id="CHEBI:29105"/>
    </ligand>
</feature>
<feature type="binding site" evidence="1">
    <location>
        <position position="337"/>
    </location>
    <ligand>
        <name>Zn(2+)</name>
        <dbReference type="ChEBI" id="CHEBI:29105"/>
    </ligand>
</feature>
<proteinExistence type="inferred from homology"/>
<keyword id="KW-0328">Glycosyltransferase</keyword>
<keyword id="KW-0479">Metal-binding</keyword>
<keyword id="KW-0671">Queuosine biosynthesis</keyword>
<keyword id="KW-1185">Reference proteome</keyword>
<keyword id="KW-0808">Transferase</keyword>
<keyword id="KW-0819">tRNA processing</keyword>
<keyword id="KW-0862">Zinc</keyword>
<name>TGT_LISMO</name>
<sequence>MSAIRYELIKTDKQTGARLGKIHTPHGTFDTPMFMPVGTLATVKTMSPEELKAMGAGIILSNTYHLWLRPGEELIREAGGLHKFMNWDQPILTDSGGFQVFSLSKMRDIKEEGVHFRNHLNGDKLFLSPEKAIQIQNALGSDIMMSFDECPPYPASHEYMKKSVERTSRWAERGLKAHVRPEDQGLFGIVQGGAYEDLRAQSAKDLVSLDFPGYSIGGLSVGEPKDVMNRVLEHTTPLLPANKPRYLMGVGSPDSLIDGVIRGVDMFDCVLPTRIARNGTCMTSSGRLVIKNAKFTHDFRPIDENCDCYTCKNYSRAYIRHLIRCEETFGIRLTTYHNLHFLLNLMKQVRGAIMEDRLADFREEFFEQYGFNRPDAKNF</sequence>
<reference key="1">
    <citation type="journal article" date="2001" name="Science">
        <title>Comparative genomics of Listeria species.</title>
        <authorList>
            <person name="Glaser P."/>
            <person name="Frangeul L."/>
            <person name="Buchrieser C."/>
            <person name="Rusniok C."/>
            <person name="Amend A."/>
            <person name="Baquero F."/>
            <person name="Berche P."/>
            <person name="Bloecker H."/>
            <person name="Brandt P."/>
            <person name="Chakraborty T."/>
            <person name="Charbit A."/>
            <person name="Chetouani F."/>
            <person name="Couve E."/>
            <person name="de Daruvar A."/>
            <person name="Dehoux P."/>
            <person name="Domann E."/>
            <person name="Dominguez-Bernal G."/>
            <person name="Duchaud E."/>
            <person name="Durant L."/>
            <person name="Dussurget O."/>
            <person name="Entian K.-D."/>
            <person name="Fsihi H."/>
            <person name="Garcia-del Portillo F."/>
            <person name="Garrido P."/>
            <person name="Gautier L."/>
            <person name="Goebel W."/>
            <person name="Gomez-Lopez N."/>
            <person name="Hain T."/>
            <person name="Hauf J."/>
            <person name="Jackson D."/>
            <person name="Jones L.-M."/>
            <person name="Kaerst U."/>
            <person name="Kreft J."/>
            <person name="Kuhn M."/>
            <person name="Kunst F."/>
            <person name="Kurapkat G."/>
            <person name="Madueno E."/>
            <person name="Maitournam A."/>
            <person name="Mata Vicente J."/>
            <person name="Ng E."/>
            <person name="Nedjari H."/>
            <person name="Nordsiek G."/>
            <person name="Novella S."/>
            <person name="de Pablos B."/>
            <person name="Perez-Diaz J.-C."/>
            <person name="Purcell R."/>
            <person name="Remmel B."/>
            <person name="Rose M."/>
            <person name="Schlueter T."/>
            <person name="Simoes N."/>
            <person name="Tierrez A."/>
            <person name="Vazquez-Boland J.-A."/>
            <person name="Voss H."/>
            <person name="Wehland J."/>
            <person name="Cossart P."/>
        </authorList>
    </citation>
    <scope>NUCLEOTIDE SEQUENCE [LARGE SCALE GENOMIC DNA]</scope>
    <source>
        <strain>ATCC BAA-679 / EGD-e</strain>
    </source>
</reference>
<gene>
    <name evidence="1" type="primary">tgt</name>
    <name type="ordered locus">lmo1530</name>
</gene>
<accession>Q8Y700</accession>